<sequence>MQLFYVPLLSLFVLFVSLSFYFLFYKSKSGSTSGLPLPPGKTGWPVIGESFEFLSTGWKGYPEKFIFDRLAKYSSNVFKTSLFGQPAAAFCGAACNKFLFSNENKLVQAWWPDSVNKVFPSSTQTSSKEEAIKMRKLLPNFLKPEALQRYVGVMDQIATKHFKSGWENKKEVLVFPLAKNYTFWIACKVFVSVEEPTQVAKLLEPFNAIASGIISVPIDLPGTPFNSAIKSSKIVRDKLMGIIKQRKTDLGEGKASPTQDILSHMLLTSDENGKFMTEGDIADKILGLLIGGHDTASSACTFVVKFLAELPEIYEGVYKEQMEIAKSKKAGELLNWEDIQKMKYSWNVACEVLRLAPPLQGAFREALTDFSYNGFSIPKGWKLYWSANSTHRNSEVFPEPLKFDPSRFEGAGPPPYSFVPFGGGPRMCPGKEYARLEILVFMHHVVKRFKWEKVIPDEKIVVNPMPIPAKGLPVRLFPHKA</sequence>
<gene>
    <name evidence="4" type="primary">CYP716A94</name>
</gene>
<dbReference type="EC" id="1.14.14.126" evidence="3"/>
<dbReference type="EMBL" id="KT150521">
    <property type="protein sequence ID" value="ALO23117.1"/>
    <property type="molecule type" value="mRNA"/>
</dbReference>
<dbReference type="SMR" id="A0A0S2II38"/>
<dbReference type="BRENDA" id="1.14.14.126">
    <property type="organism ID" value="15444"/>
</dbReference>
<dbReference type="GO" id="GO:0016020">
    <property type="term" value="C:membrane"/>
    <property type="evidence" value="ECO:0007669"/>
    <property type="project" value="UniProtKB-SubCell"/>
</dbReference>
<dbReference type="GO" id="GO:0102373">
    <property type="term" value="F:beta-amyrin 28-monooxygenase activity"/>
    <property type="evidence" value="ECO:0007669"/>
    <property type="project" value="UniProtKB-EC"/>
</dbReference>
<dbReference type="GO" id="GO:0020037">
    <property type="term" value="F:heme binding"/>
    <property type="evidence" value="ECO:0007669"/>
    <property type="project" value="InterPro"/>
</dbReference>
<dbReference type="GO" id="GO:0005506">
    <property type="term" value="F:iron ion binding"/>
    <property type="evidence" value="ECO:0007669"/>
    <property type="project" value="InterPro"/>
</dbReference>
<dbReference type="GO" id="GO:0016712">
    <property type="term" value="F:oxidoreductase activity, acting on paired donors, with incorporation or reduction of molecular oxygen, reduced flavin or flavoprotein as one donor, and incorporation of one atom of oxygen"/>
    <property type="evidence" value="ECO:0000314"/>
    <property type="project" value="UniProtKB"/>
</dbReference>
<dbReference type="GO" id="GO:0016134">
    <property type="term" value="P:saponin metabolic process"/>
    <property type="evidence" value="ECO:0000314"/>
    <property type="project" value="UniProtKB"/>
</dbReference>
<dbReference type="GO" id="GO:0016125">
    <property type="term" value="P:sterol metabolic process"/>
    <property type="evidence" value="ECO:0007669"/>
    <property type="project" value="TreeGrafter"/>
</dbReference>
<dbReference type="CDD" id="cd11043">
    <property type="entry name" value="CYP90-like"/>
    <property type="match status" value="1"/>
</dbReference>
<dbReference type="FunFam" id="1.10.630.10:FF:000022">
    <property type="entry name" value="Taxadiene 5-alpha hydroxylase"/>
    <property type="match status" value="1"/>
</dbReference>
<dbReference type="Gene3D" id="1.10.630.10">
    <property type="entry name" value="Cytochrome P450"/>
    <property type="match status" value="1"/>
</dbReference>
<dbReference type="InterPro" id="IPR001128">
    <property type="entry name" value="Cyt_P450"/>
</dbReference>
<dbReference type="InterPro" id="IPR017972">
    <property type="entry name" value="Cyt_P450_CS"/>
</dbReference>
<dbReference type="InterPro" id="IPR002401">
    <property type="entry name" value="Cyt_P450_E_grp-I"/>
</dbReference>
<dbReference type="InterPro" id="IPR036396">
    <property type="entry name" value="Cyt_P450_sf"/>
</dbReference>
<dbReference type="PANTHER" id="PTHR24286">
    <property type="entry name" value="CYTOCHROME P450 26"/>
    <property type="match status" value="1"/>
</dbReference>
<dbReference type="PANTHER" id="PTHR24286:SF349">
    <property type="entry name" value="CYTOCHROME P450 716A1-RELATED"/>
    <property type="match status" value="1"/>
</dbReference>
<dbReference type="Pfam" id="PF00067">
    <property type="entry name" value="p450"/>
    <property type="match status" value="1"/>
</dbReference>
<dbReference type="PRINTS" id="PR00463">
    <property type="entry name" value="EP450I"/>
</dbReference>
<dbReference type="PRINTS" id="PR00385">
    <property type="entry name" value="P450"/>
</dbReference>
<dbReference type="SUPFAM" id="SSF48264">
    <property type="entry name" value="Cytochrome P450"/>
    <property type="match status" value="1"/>
</dbReference>
<dbReference type="PROSITE" id="PS00086">
    <property type="entry name" value="CYTOCHROME_P450"/>
    <property type="match status" value="1"/>
</dbReference>
<keyword id="KW-0349">Heme</keyword>
<keyword id="KW-0408">Iron</keyword>
<keyword id="KW-0472">Membrane</keyword>
<keyword id="KW-0479">Metal-binding</keyword>
<keyword id="KW-0503">Monooxygenase</keyword>
<keyword id="KW-0560">Oxidoreductase</keyword>
<keyword id="KW-0812">Transmembrane</keyword>
<keyword id="KW-1133">Transmembrane helix</keyword>
<accession>A0A0S2II38</accession>
<name>C7A94_KALSE</name>
<proteinExistence type="evidence at protein level"/>
<evidence type="ECO:0000250" key="1">
    <source>
        <dbReference type="UniProtKB" id="Q94IP1"/>
    </source>
</evidence>
<evidence type="ECO:0000255" key="2"/>
<evidence type="ECO:0000269" key="3">
    <source>
    </source>
</evidence>
<evidence type="ECO:0000303" key="4">
    <source>
    </source>
</evidence>
<evidence type="ECO:0000305" key="5"/>
<organism>
    <name type="scientific">Kalopanax septemlobus</name>
    <name type="common">Castor aralia</name>
    <name type="synonym">Acanthopanax septemlobus</name>
    <dbReference type="NCBI Taxonomy" id="228393"/>
    <lineage>
        <taxon>Eukaryota</taxon>
        <taxon>Viridiplantae</taxon>
        <taxon>Streptophyta</taxon>
        <taxon>Embryophyta</taxon>
        <taxon>Tracheophyta</taxon>
        <taxon>Spermatophyta</taxon>
        <taxon>Magnoliopsida</taxon>
        <taxon>eudicotyledons</taxon>
        <taxon>Gunneridae</taxon>
        <taxon>Pentapetalae</taxon>
        <taxon>asterids</taxon>
        <taxon>campanulids</taxon>
        <taxon>Apiales</taxon>
        <taxon>Araliaceae</taxon>
        <taxon>Kalopanax</taxon>
    </lineage>
</organism>
<comment type="function">
    <text evidence="3">Catalyzes the oxidation of the methyl group to a carboxyl group at the C-28 position of beta-amyrin to form oleanolate.</text>
</comment>
<comment type="catalytic activity">
    <reaction evidence="3">
        <text>beta-amyrin + 3 reduced [NADPH--hemoprotein reductase] + 3 O2 = oleanolate + 3 oxidized [NADPH--hemoprotein reductase] + 4 H2O + 4 H(+)</text>
        <dbReference type="Rhea" id="RHEA:43068"/>
        <dbReference type="Rhea" id="RHEA-COMP:11964"/>
        <dbReference type="Rhea" id="RHEA-COMP:11965"/>
        <dbReference type="ChEBI" id="CHEBI:10352"/>
        <dbReference type="ChEBI" id="CHEBI:15377"/>
        <dbReference type="ChEBI" id="CHEBI:15378"/>
        <dbReference type="ChEBI" id="CHEBI:15379"/>
        <dbReference type="ChEBI" id="CHEBI:57618"/>
        <dbReference type="ChEBI" id="CHEBI:58210"/>
        <dbReference type="ChEBI" id="CHEBI:82828"/>
        <dbReference type="EC" id="1.14.14.126"/>
    </reaction>
    <physiologicalReaction direction="left-to-right" evidence="3">
        <dbReference type="Rhea" id="RHEA:43069"/>
    </physiologicalReaction>
</comment>
<comment type="cofactor">
    <cofactor evidence="1">
        <name>heme</name>
        <dbReference type="ChEBI" id="CHEBI:30413"/>
    </cofactor>
</comment>
<comment type="subcellular location">
    <subcellularLocation>
        <location evidence="2">Membrane</location>
        <topology evidence="2">Single-pass membrane protein</topology>
    </subcellularLocation>
</comment>
<comment type="similarity">
    <text evidence="5">Belongs to the cytochrome P450 family.</text>
</comment>
<reference key="1">
    <citation type="journal article" date="2018" name="Plant Cell Physiol.">
        <title>Transcriptomic analysis of Kalopanax septemlobus and characterization of KsBAS, CYP716A94 and CYP72A397 genes involved in hederagenin saponin biosynthesis.</title>
        <authorList>
            <person name="Han J.Y."/>
            <person name="Chun J.H."/>
            <person name="Oh S.A."/>
            <person name="Park S.B."/>
            <person name="Hwang H.S."/>
            <person name="Lee H."/>
            <person name="Choi Y.E."/>
        </authorList>
    </citation>
    <scope>NUCLEOTIDE SEQUENCE [MRNA]</scope>
    <scope>FUNCTION</scope>
    <scope>CATALYTIC ACTIVITY</scope>
</reference>
<feature type="chain" id="PRO_0000452135" description="Beta-amyrin 28-monooxygenase">
    <location>
        <begin position="1"/>
        <end position="481"/>
    </location>
</feature>
<feature type="transmembrane region" description="Helical" evidence="2">
    <location>
        <begin position="4"/>
        <end position="24"/>
    </location>
</feature>
<feature type="binding site" description="axial binding residue" evidence="1">
    <location>
        <position position="428"/>
    </location>
    <ligand>
        <name>heme</name>
        <dbReference type="ChEBI" id="CHEBI:30413"/>
    </ligand>
    <ligandPart>
        <name>Fe</name>
        <dbReference type="ChEBI" id="CHEBI:18248"/>
    </ligandPart>
</feature>
<protein>
    <recommendedName>
        <fullName>Beta-amyrin 28-monooxygenase</fullName>
        <ecNumber evidence="3">1.14.14.126</ecNumber>
    </recommendedName>
    <alternativeName>
        <fullName evidence="4">Cytochrome P450 716A94</fullName>
    </alternativeName>
</protein>